<sequence>MKHWYDLITEAQSVEKIEEIRISLFGKKGVLAAEFARMKEASDEEKSKIAQELNIHKTTLMNELVQRKITLQTQELQEHMKSEAIDVTMFSSSSESGALHPVMQTMDRIVEYFSSMNFTVKTGTMVEDDFNNFEALNLPKYHPARDMQDTFYFKDEMLLRTHTSPVQIRTMMSSKPPIRMIAPGAVFRRDYDITHTPMFHQVEGLLVDKEGAVSFANLKFILEDFLKYMFGDVEVRFRPSFFPFTEPSAEVDISCVFCKGSGCRVCSKTGWLEVLGCGIVDPNVFEAVKYQNVSGYAFGLGVERFAMLIHQIGDLRSLFEGDIKLLEQFR</sequence>
<feature type="chain" id="PRO_0000232036" description="Phenylalanine--tRNA ligase alpha subunit">
    <location>
        <begin position="1"/>
        <end position="330"/>
    </location>
</feature>
<feature type="binding site" evidence="1">
    <location>
        <position position="246"/>
    </location>
    <ligand>
        <name>Mg(2+)</name>
        <dbReference type="ChEBI" id="CHEBI:18420"/>
        <note>shared with beta subunit</note>
    </ligand>
</feature>
<proteinExistence type="inferred from homology"/>
<dbReference type="EC" id="6.1.1.20" evidence="1"/>
<dbReference type="EMBL" id="CP000153">
    <property type="protein sequence ID" value="ABB44147.1"/>
    <property type="molecule type" value="Genomic_DNA"/>
</dbReference>
<dbReference type="RefSeq" id="WP_011372499.1">
    <property type="nucleotide sequence ID" value="NC_007575.1"/>
</dbReference>
<dbReference type="SMR" id="Q30S84"/>
<dbReference type="STRING" id="326298.Suden_0869"/>
<dbReference type="KEGG" id="tdn:Suden_0869"/>
<dbReference type="eggNOG" id="COG0016">
    <property type="taxonomic scope" value="Bacteria"/>
</dbReference>
<dbReference type="HOGENOM" id="CLU_025086_0_1_7"/>
<dbReference type="OrthoDB" id="9800719at2"/>
<dbReference type="Proteomes" id="UP000002714">
    <property type="component" value="Chromosome"/>
</dbReference>
<dbReference type="GO" id="GO:0005737">
    <property type="term" value="C:cytoplasm"/>
    <property type="evidence" value="ECO:0007669"/>
    <property type="project" value="UniProtKB-SubCell"/>
</dbReference>
<dbReference type="GO" id="GO:0005524">
    <property type="term" value="F:ATP binding"/>
    <property type="evidence" value="ECO:0007669"/>
    <property type="project" value="UniProtKB-UniRule"/>
</dbReference>
<dbReference type="GO" id="GO:0000287">
    <property type="term" value="F:magnesium ion binding"/>
    <property type="evidence" value="ECO:0007669"/>
    <property type="project" value="UniProtKB-UniRule"/>
</dbReference>
<dbReference type="GO" id="GO:0004826">
    <property type="term" value="F:phenylalanine-tRNA ligase activity"/>
    <property type="evidence" value="ECO:0007669"/>
    <property type="project" value="UniProtKB-UniRule"/>
</dbReference>
<dbReference type="GO" id="GO:0000049">
    <property type="term" value="F:tRNA binding"/>
    <property type="evidence" value="ECO:0007669"/>
    <property type="project" value="InterPro"/>
</dbReference>
<dbReference type="GO" id="GO:0006432">
    <property type="term" value="P:phenylalanyl-tRNA aminoacylation"/>
    <property type="evidence" value="ECO:0007669"/>
    <property type="project" value="UniProtKB-UniRule"/>
</dbReference>
<dbReference type="CDD" id="cd00496">
    <property type="entry name" value="PheRS_alpha_core"/>
    <property type="match status" value="1"/>
</dbReference>
<dbReference type="Gene3D" id="3.30.930.10">
    <property type="entry name" value="Bira Bifunctional Protein, Domain 2"/>
    <property type="match status" value="1"/>
</dbReference>
<dbReference type="HAMAP" id="MF_00281">
    <property type="entry name" value="Phe_tRNA_synth_alpha1"/>
    <property type="match status" value="1"/>
</dbReference>
<dbReference type="InterPro" id="IPR006195">
    <property type="entry name" value="aa-tRNA-synth_II"/>
</dbReference>
<dbReference type="InterPro" id="IPR045864">
    <property type="entry name" value="aa-tRNA-synth_II/BPL/LPL"/>
</dbReference>
<dbReference type="InterPro" id="IPR004529">
    <property type="entry name" value="Phe-tRNA-synth_IIc_asu"/>
</dbReference>
<dbReference type="InterPro" id="IPR004188">
    <property type="entry name" value="Phe-tRNA_ligase_II_N"/>
</dbReference>
<dbReference type="InterPro" id="IPR022911">
    <property type="entry name" value="Phe_tRNA_ligase_alpha1_bac"/>
</dbReference>
<dbReference type="InterPro" id="IPR002319">
    <property type="entry name" value="Phenylalanyl-tRNA_Synthase"/>
</dbReference>
<dbReference type="InterPro" id="IPR010978">
    <property type="entry name" value="tRNA-bd_arm"/>
</dbReference>
<dbReference type="NCBIfam" id="TIGR00468">
    <property type="entry name" value="pheS"/>
    <property type="match status" value="1"/>
</dbReference>
<dbReference type="PANTHER" id="PTHR11538:SF41">
    <property type="entry name" value="PHENYLALANINE--TRNA LIGASE, MITOCHONDRIAL"/>
    <property type="match status" value="1"/>
</dbReference>
<dbReference type="PANTHER" id="PTHR11538">
    <property type="entry name" value="PHENYLALANYL-TRNA SYNTHETASE"/>
    <property type="match status" value="1"/>
</dbReference>
<dbReference type="Pfam" id="PF02912">
    <property type="entry name" value="Phe_tRNA-synt_N"/>
    <property type="match status" value="1"/>
</dbReference>
<dbReference type="Pfam" id="PF01409">
    <property type="entry name" value="tRNA-synt_2d"/>
    <property type="match status" value="1"/>
</dbReference>
<dbReference type="SUPFAM" id="SSF55681">
    <property type="entry name" value="Class II aaRS and biotin synthetases"/>
    <property type="match status" value="1"/>
</dbReference>
<dbReference type="SUPFAM" id="SSF46589">
    <property type="entry name" value="tRNA-binding arm"/>
    <property type="match status" value="1"/>
</dbReference>
<dbReference type="PROSITE" id="PS50862">
    <property type="entry name" value="AA_TRNA_LIGASE_II"/>
    <property type="match status" value="1"/>
</dbReference>
<gene>
    <name evidence="1" type="primary">pheS</name>
    <name type="ordered locus">Suden_0869</name>
</gene>
<accession>Q30S84</accession>
<protein>
    <recommendedName>
        <fullName evidence="1">Phenylalanine--tRNA ligase alpha subunit</fullName>
        <ecNumber evidence="1">6.1.1.20</ecNumber>
    </recommendedName>
    <alternativeName>
        <fullName evidence="1">Phenylalanyl-tRNA synthetase alpha subunit</fullName>
        <shortName evidence="1">PheRS</shortName>
    </alternativeName>
</protein>
<name>SYFA_SULDN</name>
<keyword id="KW-0030">Aminoacyl-tRNA synthetase</keyword>
<keyword id="KW-0067">ATP-binding</keyword>
<keyword id="KW-0963">Cytoplasm</keyword>
<keyword id="KW-0436">Ligase</keyword>
<keyword id="KW-0460">Magnesium</keyword>
<keyword id="KW-0479">Metal-binding</keyword>
<keyword id="KW-0547">Nucleotide-binding</keyword>
<keyword id="KW-0648">Protein biosynthesis</keyword>
<keyword id="KW-1185">Reference proteome</keyword>
<comment type="catalytic activity">
    <reaction evidence="1">
        <text>tRNA(Phe) + L-phenylalanine + ATP = L-phenylalanyl-tRNA(Phe) + AMP + diphosphate + H(+)</text>
        <dbReference type="Rhea" id="RHEA:19413"/>
        <dbReference type="Rhea" id="RHEA-COMP:9668"/>
        <dbReference type="Rhea" id="RHEA-COMP:9699"/>
        <dbReference type="ChEBI" id="CHEBI:15378"/>
        <dbReference type="ChEBI" id="CHEBI:30616"/>
        <dbReference type="ChEBI" id="CHEBI:33019"/>
        <dbReference type="ChEBI" id="CHEBI:58095"/>
        <dbReference type="ChEBI" id="CHEBI:78442"/>
        <dbReference type="ChEBI" id="CHEBI:78531"/>
        <dbReference type="ChEBI" id="CHEBI:456215"/>
        <dbReference type="EC" id="6.1.1.20"/>
    </reaction>
</comment>
<comment type="cofactor">
    <cofactor evidence="1">
        <name>Mg(2+)</name>
        <dbReference type="ChEBI" id="CHEBI:18420"/>
    </cofactor>
    <text evidence="1">Binds 2 magnesium ions per tetramer.</text>
</comment>
<comment type="subunit">
    <text evidence="1">Tetramer of two alpha and two beta subunits.</text>
</comment>
<comment type="subcellular location">
    <subcellularLocation>
        <location evidence="1">Cytoplasm</location>
    </subcellularLocation>
</comment>
<comment type="similarity">
    <text evidence="1">Belongs to the class-II aminoacyl-tRNA synthetase family. Phe-tRNA synthetase alpha subunit type 1 subfamily.</text>
</comment>
<reference key="1">
    <citation type="journal article" date="2008" name="Appl. Environ. Microbiol.">
        <title>Genome of the epsilonproteobacterial chemolithoautotroph Sulfurimonas denitrificans.</title>
        <authorList>
            <person name="Sievert S.M."/>
            <person name="Scott K.M."/>
            <person name="Klotz M.G."/>
            <person name="Chain P.S.G."/>
            <person name="Hauser L.J."/>
            <person name="Hemp J."/>
            <person name="Huegler M."/>
            <person name="Land M."/>
            <person name="Lapidus A."/>
            <person name="Larimer F.W."/>
            <person name="Lucas S."/>
            <person name="Malfatti S.A."/>
            <person name="Meyer F."/>
            <person name="Paulsen I.T."/>
            <person name="Ren Q."/>
            <person name="Simon J."/>
            <person name="Bailey K."/>
            <person name="Diaz E."/>
            <person name="Fitzpatrick K.A."/>
            <person name="Glover B."/>
            <person name="Gwatney N."/>
            <person name="Korajkic A."/>
            <person name="Long A."/>
            <person name="Mobberley J.M."/>
            <person name="Pantry S.N."/>
            <person name="Pazder G."/>
            <person name="Peterson S."/>
            <person name="Quintanilla J.D."/>
            <person name="Sprinkle R."/>
            <person name="Stephens J."/>
            <person name="Thomas P."/>
            <person name="Vaughn R."/>
            <person name="Weber M.J."/>
            <person name="Wooten L.L."/>
        </authorList>
    </citation>
    <scope>NUCLEOTIDE SEQUENCE [LARGE SCALE GENOMIC DNA]</scope>
    <source>
        <strain>ATCC 33889 / DSM 1251</strain>
    </source>
</reference>
<organism>
    <name type="scientific">Sulfurimonas denitrificans (strain ATCC 33889 / DSM 1251)</name>
    <name type="common">Thiomicrospira denitrificans (strain ATCC 33889 / DSM 1251)</name>
    <dbReference type="NCBI Taxonomy" id="326298"/>
    <lineage>
        <taxon>Bacteria</taxon>
        <taxon>Pseudomonadati</taxon>
        <taxon>Campylobacterota</taxon>
        <taxon>Epsilonproteobacteria</taxon>
        <taxon>Campylobacterales</taxon>
        <taxon>Sulfurimonadaceae</taxon>
        <taxon>Sulfurimonas</taxon>
    </lineage>
</organism>
<evidence type="ECO:0000255" key="1">
    <source>
        <dbReference type="HAMAP-Rule" id="MF_00281"/>
    </source>
</evidence>